<gene>
    <name type="primary">CFP</name>
    <name type="synonym">PFC</name>
</gene>
<sequence length="469" mass="51413">MITEGAQAPRLLLPPLLLLLTLPATGSDPVLCFTRYEESSGKCKGLLGGGVSVKDCCLNTASAYQERSGGLCQPCRSPRWSLWSTWAPCSVTCSEGSQLRYRRCVGWNGQCSEKVALGTLEWQLQACEDQQCCPEMGGWSGWGPWEPCSVTCSKGTRTRRRACNHPAPKCGGHCPGQAQESEACDTQQSCPTHGAWAAWGPWTPCSGSCHSGTHEPKETRSRKCSAPEPSQKPPGKPCPGLAYEQRRCTGLPPCPVAGSWGPWGPVSPCPVTCGLGQTMEQRTCDHPVPQHGGPFCAGDATRTHICNTAVPCPVDGEWDSWGEWSTCVRRNMKSISCQEIPGQQSRWRTCKGRKFDGHRCAGQQQDIRHCYSIQHCPLKGSWSEWSTWGLCIPPCGPNPTRARQRLCTPLLPKYPPTVSMVEGQGEKNVTFWGRPLPRCEELQGQKLVVEEKRPCLHVPACKDPEEEKL</sequence>
<reference key="1">
    <citation type="submission" date="2004-11" db="EMBL/GenBank/DDBJ databases">
        <authorList>
            <consortium name="The German cDNA consortium"/>
        </authorList>
    </citation>
    <scope>NUCLEOTIDE SEQUENCE [LARGE SCALE MRNA]</scope>
    <source>
        <tissue>Liver</tissue>
    </source>
</reference>
<feature type="signal peptide" evidence="2">
    <location>
        <begin position="1"/>
        <end position="27"/>
    </location>
</feature>
<feature type="chain" id="PRO_0000043370" description="Properdin">
    <location>
        <begin position="28"/>
        <end position="469"/>
    </location>
</feature>
<feature type="domain" description="TSP type-1 0" evidence="3">
    <location>
        <begin position="28"/>
        <end position="76"/>
    </location>
</feature>
<feature type="domain" description="TSP type-1 1" evidence="3">
    <location>
        <begin position="77"/>
        <end position="134"/>
    </location>
</feature>
<feature type="domain" description="TSP type-1 2" evidence="3">
    <location>
        <begin position="136"/>
        <end position="191"/>
    </location>
</feature>
<feature type="domain" description="TSP type-1 3" evidence="3">
    <location>
        <begin position="193"/>
        <end position="255"/>
    </location>
</feature>
<feature type="domain" description="TSP type-1 4" evidence="3">
    <location>
        <begin position="257"/>
        <end position="313"/>
    </location>
</feature>
<feature type="domain" description="TSP type-1 5" evidence="3">
    <location>
        <begin position="315"/>
        <end position="377"/>
    </location>
</feature>
<feature type="domain" description="TSP type-1 6" evidence="3">
    <location>
        <begin position="379"/>
        <end position="462"/>
    </location>
</feature>
<feature type="region of interest" description="Disordered" evidence="4">
    <location>
        <begin position="218"/>
        <end position="238"/>
    </location>
</feature>
<feature type="region of interest" description="Interaction with Complement C3 beta chain" evidence="1">
    <location>
        <begin position="351"/>
        <end position="359"/>
    </location>
</feature>
<feature type="glycosylation site" description="C-linked (Man) tryptophan" evidence="1">
    <location>
        <position position="83"/>
    </location>
</feature>
<feature type="glycosylation site" description="C-linked (Man) tryptophan" evidence="1">
    <location>
        <position position="86"/>
    </location>
</feature>
<feature type="glycosylation site" description="C-linked (Man) tryptophan" evidence="1">
    <location>
        <position position="139"/>
    </location>
</feature>
<feature type="glycosylation site" description="C-linked (Man) tryptophan" evidence="1">
    <location>
        <position position="142"/>
    </location>
</feature>
<feature type="glycosylation site" description="C-linked (Man) tryptophan" evidence="1">
    <location>
        <position position="145"/>
    </location>
</feature>
<feature type="glycosylation site" description="O-linked (Fuc...) threonine" evidence="1">
    <location>
        <position position="151"/>
    </location>
</feature>
<feature type="glycosylation site" description="C-linked (Man) tryptophan" evidence="1">
    <location>
        <position position="196"/>
    </location>
</feature>
<feature type="glycosylation site" description="C-linked (Man) tryptophan" evidence="1">
    <location>
        <position position="199"/>
    </location>
</feature>
<feature type="glycosylation site" description="C-linked (Man) tryptophan" evidence="1">
    <location>
        <position position="202"/>
    </location>
</feature>
<feature type="glycosylation site" description="O-linked (Fuc...) serine" evidence="1">
    <location>
        <position position="208"/>
    </location>
</feature>
<feature type="glycosylation site" description="C-linked (Man) tryptophan" evidence="1">
    <location>
        <position position="260"/>
    </location>
</feature>
<feature type="glycosylation site" description="C-linked (Man) tryptophan" evidence="1">
    <location>
        <position position="263"/>
    </location>
</feature>
<feature type="glycosylation site" description="O-linked (Fuc...) threonine" evidence="1">
    <location>
        <position position="272"/>
    </location>
</feature>
<feature type="glycosylation site" description="C-linked (Man) tryptophan" evidence="1">
    <location>
        <position position="321"/>
    </location>
</feature>
<feature type="glycosylation site" description="C-linked (Man) tryptophan" evidence="1">
    <location>
        <position position="324"/>
    </location>
</feature>
<feature type="glycosylation site" description="C-linked (Man) tryptophan" evidence="1">
    <location>
        <position position="382"/>
    </location>
</feature>
<feature type="glycosylation site" description="C-linked (Man) tryptophan" evidence="1">
    <location>
        <position position="385"/>
    </location>
</feature>
<feature type="glycosylation site" description="C-linked (Man) tryptophan" evidence="1">
    <location>
        <position position="388"/>
    </location>
</feature>
<feature type="glycosylation site" description="N-linked (GlcNAc...) asparagine" evidence="2">
    <location>
        <position position="428"/>
    </location>
</feature>
<feature type="disulfide bond" evidence="1 3">
    <location>
        <begin position="32"/>
        <end position="56"/>
    </location>
</feature>
<feature type="disulfide bond" evidence="1 3">
    <location>
        <begin position="43"/>
        <end position="72"/>
    </location>
</feature>
<feature type="disulfide bond" evidence="1">
    <location>
        <begin position="57"/>
        <end position="75"/>
    </location>
</feature>
<feature type="disulfide bond" evidence="3">
    <location>
        <begin position="89"/>
        <end position="127"/>
    </location>
</feature>
<feature type="disulfide bond" evidence="3">
    <location>
        <begin position="93"/>
        <end position="133"/>
    </location>
</feature>
<feature type="disulfide bond" evidence="3">
    <location>
        <begin position="104"/>
        <end position="111"/>
    </location>
</feature>
<feature type="disulfide bond" evidence="1">
    <location>
        <begin position="132"/>
        <end position="170"/>
    </location>
</feature>
<feature type="disulfide bond" evidence="3">
    <location>
        <begin position="148"/>
        <end position="184"/>
    </location>
</feature>
<feature type="disulfide bond" evidence="3">
    <location>
        <begin position="152"/>
        <end position="190"/>
    </location>
</feature>
<feature type="disulfide bond" evidence="3">
    <location>
        <begin position="163"/>
        <end position="174"/>
    </location>
</feature>
<feature type="disulfide bond" evidence="3">
    <location>
        <begin position="205"/>
        <end position="248"/>
    </location>
</feature>
<feature type="disulfide bond" evidence="3">
    <location>
        <begin position="209"/>
        <end position="254"/>
    </location>
</feature>
<feature type="disulfide bond" evidence="3">
    <location>
        <begin position="224"/>
        <end position="238"/>
    </location>
</feature>
<feature type="disulfide bond" evidence="3">
    <location>
        <begin position="269"/>
        <end position="306"/>
    </location>
</feature>
<feature type="disulfide bond" evidence="3">
    <location>
        <begin position="273"/>
        <end position="312"/>
    </location>
</feature>
<feature type="disulfide bond" evidence="3">
    <location>
        <begin position="284"/>
        <end position="296"/>
    </location>
</feature>
<feature type="disulfide bond" evidence="3">
    <location>
        <begin position="327"/>
        <end position="370"/>
    </location>
</feature>
<feature type="disulfide bond" evidence="3">
    <location>
        <begin position="337"/>
        <end position="376"/>
    </location>
</feature>
<feature type="disulfide bond" evidence="3">
    <location>
        <begin position="350"/>
        <end position="360"/>
    </location>
</feature>
<feature type="disulfide bond" evidence="3">
    <location>
        <begin position="391"/>
        <end position="455"/>
    </location>
</feature>
<feature type="disulfide bond" evidence="3">
    <location>
        <begin position="395"/>
        <end position="461"/>
    </location>
</feature>
<feature type="disulfide bond" evidence="3">
    <location>
        <begin position="407"/>
        <end position="439"/>
    </location>
</feature>
<keyword id="KW-0179">Complement alternate pathway</keyword>
<keyword id="KW-1015">Disulfide bond</keyword>
<keyword id="KW-0325">Glycoprotein</keyword>
<keyword id="KW-0391">Immunity</keyword>
<keyword id="KW-0399">Innate immunity</keyword>
<keyword id="KW-1185">Reference proteome</keyword>
<keyword id="KW-0677">Repeat</keyword>
<keyword id="KW-0964">Secreted</keyword>
<keyword id="KW-0732">Signal</keyword>
<dbReference type="EMBL" id="CR858590">
    <property type="protein sequence ID" value="CAH90812.1"/>
    <property type="molecule type" value="mRNA"/>
</dbReference>
<dbReference type="RefSeq" id="NP_001127338.1">
    <property type="nucleotide sequence ID" value="NM_001133866.1"/>
</dbReference>
<dbReference type="RefSeq" id="XP_009233034.1">
    <property type="nucleotide sequence ID" value="XM_009234759.1"/>
</dbReference>
<dbReference type="SMR" id="Q5RBP8"/>
<dbReference type="FunCoup" id="Q5RBP8">
    <property type="interactions" value="58"/>
</dbReference>
<dbReference type="STRING" id="9601.ENSPPYP00000022718"/>
<dbReference type="GlyCosmos" id="Q5RBP8">
    <property type="glycosylation" value="19 sites, No reported glycans"/>
</dbReference>
<dbReference type="Ensembl" id="ENSPPYT00000023680.3">
    <property type="protein sequence ID" value="ENSPPYP00000022718.2"/>
    <property type="gene ID" value="ENSPPYG00000020298.3"/>
</dbReference>
<dbReference type="GeneID" id="100174400"/>
<dbReference type="KEGG" id="pon:100174400"/>
<dbReference type="CTD" id="5199"/>
<dbReference type="eggNOG" id="KOG4475">
    <property type="taxonomic scope" value="Eukaryota"/>
</dbReference>
<dbReference type="GeneTree" id="ENSGT00940000161209"/>
<dbReference type="HOGENOM" id="CLU_047129_0_0_1"/>
<dbReference type="InParanoid" id="Q5RBP8"/>
<dbReference type="OMA" id="CQACRSP"/>
<dbReference type="OrthoDB" id="446173at2759"/>
<dbReference type="TreeFam" id="TF315491"/>
<dbReference type="Proteomes" id="UP000001595">
    <property type="component" value="Chromosome X"/>
</dbReference>
<dbReference type="GO" id="GO:0098548">
    <property type="term" value="C:cytoplasmic side of Golgi membrane"/>
    <property type="evidence" value="ECO:0007669"/>
    <property type="project" value="Ensembl"/>
</dbReference>
<dbReference type="GO" id="GO:0005615">
    <property type="term" value="C:extracellular space"/>
    <property type="evidence" value="ECO:0007669"/>
    <property type="project" value="Ensembl"/>
</dbReference>
<dbReference type="GO" id="GO:0030141">
    <property type="term" value="C:secretory granule"/>
    <property type="evidence" value="ECO:0007669"/>
    <property type="project" value="Ensembl"/>
</dbReference>
<dbReference type="GO" id="GO:0006957">
    <property type="term" value="P:complement activation, alternative pathway"/>
    <property type="evidence" value="ECO:0007669"/>
    <property type="project" value="UniProtKB-KW"/>
</dbReference>
<dbReference type="FunFam" id="2.20.100.10:FF:000133">
    <property type="entry name" value="Complement factor properdin"/>
    <property type="match status" value="1"/>
</dbReference>
<dbReference type="FunFam" id="2.20.100.10:FF:000143">
    <property type="entry name" value="Complement factor properdin"/>
    <property type="match status" value="1"/>
</dbReference>
<dbReference type="FunFam" id="2.20.100.10:FF:000001">
    <property type="entry name" value="semaphorin-5A isoform X1"/>
    <property type="match status" value="3"/>
</dbReference>
<dbReference type="Gene3D" id="2.20.100.10">
    <property type="entry name" value="Thrombospondin type-1 (TSP1) repeat"/>
    <property type="match status" value="5"/>
</dbReference>
<dbReference type="InterPro" id="IPR049536">
    <property type="entry name" value="CFP_TSR-0"/>
</dbReference>
<dbReference type="InterPro" id="IPR054019">
    <property type="entry name" value="CFP_TSR_C"/>
</dbReference>
<dbReference type="InterPro" id="IPR052065">
    <property type="entry name" value="Compl_asym_regulator"/>
</dbReference>
<dbReference type="InterPro" id="IPR000884">
    <property type="entry name" value="TSP1_rpt"/>
</dbReference>
<dbReference type="InterPro" id="IPR036383">
    <property type="entry name" value="TSP1_rpt_sf"/>
</dbReference>
<dbReference type="PANTHER" id="PTHR22906">
    <property type="entry name" value="PROPERDIN"/>
    <property type="match status" value="1"/>
</dbReference>
<dbReference type="PANTHER" id="PTHR22906:SF43">
    <property type="entry name" value="PROPERDIN"/>
    <property type="match status" value="1"/>
</dbReference>
<dbReference type="Pfam" id="PF22195">
    <property type="entry name" value="TSP1_CFP_C"/>
    <property type="match status" value="1"/>
</dbReference>
<dbReference type="Pfam" id="PF00090">
    <property type="entry name" value="TSP_1"/>
    <property type="match status" value="5"/>
</dbReference>
<dbReference type="Pfam" id="PF18487">
    <property type="entry name" value="TSR"/>
    <property type="match status" value="1"/>
</dbReference>
<dbReference type="PRINTS" id="PR01705">
    <property type="entry name" value="TSP1REPEAT"/>
</dbReference>
<dbReference type="SMART" id="SM00209">
    <property type="entry name" value="TSP1"/>
    <property type="match status" value="6"/>
</dbReference>
<dbReference type="SUPFAM" id="SSF82895">
    <property type="entry name" value="TSP-1 type 1 repeat"/>
    <property type="match status" value="6"/>
</dbReference>
<dbReference type="PROSITE" id="PS50092">
    <property type="entry name" value="TSP1"/>
    <property type="match status" value="6"/>
</dbReference>
<name>PROP_PONAB</name>
<protein>
    <recommendedName>
        <fullName>Properdin</fullName>
    </recommendedName>
    <alternativeName>
        <fullName>Complement factor P</fullName>
    </alternativeName>
</protein>
<proteinExistence type="evidence at transcript level"/>
<comment type="function">
    <text evidence="1">A positive regulator of the alternate pathway of complement (By similarity). It binds to and stabilizes the C3- and C5-convertase enzyme complexes (By similarity). Inhibits CFI-CFH mediated degradation of Inhibits CFI-CFH mediated degradation of Complement C3 beta chain (C3b) (By similarity).</text>
</comment>
<comment type="subunit">
    <text evidence="1">In plasma, properdin exists as dimers, trimers or tetramers in the relative proportions of 26:54:20 (By similarity). Interacts with the pro-C3-convertase enzyme complex (C3b-Bb) comprised of Complement C3 beta chain (C3b) and the Complement factor B Bb fragment (Bb), where it binds (via its TSP type-1 5 domain) with C3b and Bb (By similarity). This interaction stabilizes the complex and allows it to become the active C3-convertase enzyme complex (C3b-Bb-FP) (By similarity). Interacts with C3b (By similarity). Interacts with CFB (By similarity).</text>
</comment>
<comment type="subcellular location">
    <subcellularLocation>
        <location evidence="1">Secreted</location>
    </subcellularLocation>
</comment>
<comment type="domain">
    <text evidence="1">TSP type-1 domain 0 binds to TSP type-1 domain 4, and TSP type-1 domain 1 binds to TSP type-1 domain 6 (By similarity). These interactions mediate multimerization (By similarity).</text>
</comment>
<evidence type="ECO:0000250" key="1">
    <source>
        <dbReference type="UniProtKB" id="P27918"/>
    </source>
</evidence>
<evidence type="ECO:0000255" key="2"/>
<evidence type="ECO:0000255" key="3">
    <source>
        <dbReference type="PROSITE-ProRule" id="PRU00210"/>
    </source>
</evidence>
<evidence type="ECO:0000256" key="4">
    <source>
        <dbReference type="SAM" id="MobiDB-lite"/>
    </source>
</evidence>
<accession>Q5RBP8</accession>
<organism>
    <name type="scientific">Pongo abelii</name>
    <name type="common">Sumatran orangutan</name>
    <name type="synonym">Pongo pygmaeus abelii</name>
    <dbReference type="NCBI Taxonomy" id="9601"/>
    <lineage>
        <taxon>Eukaryota</taxon>
        <taxon>Metazoa</taxon>
        <taxon>Chordata</taxon>
        <taxon>Craniata</taxon>
        <taxon>Vertebrata</taxon>
        <taxon>Euteleostomi</taxon>
        <taxon>Mammalia</taxon>
        <taxon>Eutheria</taxon>
        <taxon>Euarchontoglires</taxon>
        <taxon>Primates</taxon>
        <taxon>Haplorrhini</taxon>
        <taxon>Catarrhini</taxon>
        <taxon>Hominidae</taxon>
        <taxon>Pongo</taxon>
    </lineage>
</organism>